<comment type="function">
    <text evidence="1">F(1)F(0) ATP synthase produces ATP from ADP in the presence of a proton or sodium gradient. F-type ATPases consist of two structural domains, F(1) containing the extramembraneous catalytic core and F(0) containing the membrane proton channel, linked together by a central stalk and a peripheral stalk. During catalysis, ATP synthesis in the catalytic domain of F(1) is coupled via a rotary mechanism of the central stalk subunits to proton translocation.</text>
</comment>
<comment type="function">
    <text evidence="1">Component of the F(0) channel, it forms part of the peripheral stalk, linking F(1) to F(0).</text>
</comment>
<comment type="subunit">
    <text evidence="1">F-type ATPases have 2 components, F(1) - the catalytic core - and F(0) - the membrane proton channel. F(1) has five subunits: alpha(3), beta(3), gamma(1), delta(1), epsilon(1). F(0) has three main subunits: a(1), b(2) and c(10-14). The alpha and beta chains form an alternating ring which encloses part of the gamma chain. F(1) is attached to F(0) by a central stalk formed by the gamma and epsilon chains, while a peripheral stalk is formed by the delta and b chains.</text>
</comment>
<comment type="subcellular location">
    <subcellularLocation>
        <location evidence="1">Cell inner membrane</location>
        <topology evidence="1">Single-pass membrane protein</topology>
    </subcellularLocation>
</comment>
<comment type="similarity">
    <text evidence="1">Belongs to the ATPase B chain family.</text>
</comment>
<sequence length="171" mass="19900">MFLVKMVLGFLIFLSPLCATGLDISQTDIIERSLNFLLFAGILWYFLAKKLRSFLHSKSLEISKRLEEIQAQLKVSKENKKKLLKELEQAKEKAELIISDANKEAYTITQKYELQTKMDVENLIKNSKALMDLEVKKIKRELVESVFKDLRESKKVSFNVQDCVNILKQRL</sequence>
<organism>
    <name type="scientific">Helicobacter pylori (strain Shi470)</name>
    <dbReference type="NCBI Taxonomy" id="512562"/>
    <lineage>
        <taxon>Bacteria</taxon>
        <taxon>Pseudomonadati</taxon>
        <taxon>Campylobacterota</taxon>
        <taxon>Epsilonproteobacteria</taxon>
        <taxon>Campylobacterales</taxon>
        <taxon>Helicobacteraceae</taxon>
        <taxon>Helicobacter</taxon>
    </lineage>
</organism>
<name>ATPF_HELPS</name>
<feature type="chain" id="PRO_0000368524" description="ATP synthase subunit b">
    <location>
        <begin position="1"/>
        <end position="171"/>
    </location>
</feature>
<feature type="transmembrane region" description="Helical" evidence="1">
    <location>
        <begin position="2"/>
        <end position="22"/>
    </location>
</feature>
<evidence type="ECO:0000255" key="1">
    <source>
        <dbReference type="HAMAP-Rule" id="MF_01398"/>
    </source>
</evidence>
<keyword id="KW-0066">ATP synthesis</keyword>
<keyword id="KW-0997">Cell inner membrane</keyword>
<keyword id="KW-1003">Cell membrane</keyword>
<keyword id="KW-0138">CF(0)</keyword>
<keyword id="KW-0375">Hydrogen ion transport</keyword>
<keyword id="KW-0406">Ion transport</keyword>
<keyword id="KW-0472">Membrane</keyword>
<keyword id="KW-0812">Transmembrane</keyword>
<keyword id="KW-1133">Transmembrane helix</keyword>
<keyword id="KW-0813">Transport</keyword>
<dbReference type="EMBL" id="CP001072">
    <property type="protein sequence ID" value="ACD48576.1"/>
    <property type="molecule type" value="Genomic_DNA"/>
</dbReference>
<dbReference type="RefSeq" id="WP_000480427.1">
    <property type="nucleotide sequence ID" value="NC_010698.2"/>
</dbReference>
<dbReference type="SMR" id="B2UUP4"/>
<dbReference type="KEGG" id="hps:HPSH_05850"/>
<dbReference type="HOGENOM" id="CLU_129781_1_0_7"/>
<dbReference type="GO" id="GO:0005886">
    <property type="term" value="C:plasma membrane"/>
    <property type="evidence" value="ECO:0007669"/>
    <property type="project" value="UniProtKB-SubCell"/>
</dbReference>
<dbReference type="GO" id="GO:0045259">
    <property type="term" value="C:proton-transporting ATP synthase complex"/>
    <property type="evidence" value="ECO:0007669"/>
    <property type="project" value="UniProtKB-KW"/>
</dbReference>
<dbReference type="GO" id="GO:0046933">
    <property type="term" value="F:proton-transporting ATP synthase activity, rotational mechanism"/>
    <property type="evidence" value="ECO:0007669"/>
    <property type="project" value="UniProtKB-UniRule"/>
</dbReference>
<dbReference type="CDD" id="cd06503">
    <property type="entry name" value="ATP-synt_Fo_b"/>
    <property type="match status" value="1"/>
</dbReference>
<dbReference type="Gene3D" id="1.20.5.620">
    <property type="entry name" value="F1F0 ATP synthase subunit B, membrane domain"/>
    <property type="match status" value="1"/>
</dbReference>
<dbReference type="HAMAP" id="MF_01398">
    <property type="entry name" value="ATP_synth_b_bprime"/>
    <property type="match status" value="1"/>
</dbReference>
<dbReference type="InterPro" id="IPR028987">
    <property type="entry name" value="ATP_synth_B-like_membr_sf"/>
</dbReference>
<dbReference type="InterPro" id="IPR002146">
    <property type="entry name" value="ATP_synth_b/b'su_bac/chlpt"/>
</dbReference>
<dbReference type="NCBIfam" id="NF006292">
    <property type="entry name" value="PRK08475.1"/>
    <property type="match status" value="1"/>
</dbReference>
<dbReference type="Pfam" id="PF00430">
    <property type="entry name" value="ATP-synt_B"/>
    <property type="match status" value="1"/>
</dbReference>
<dbReference type="SUPFAM" id="SSF81573">
    <property type="entry name" value="F1F0 ATP synthase subunit B, membrane domain"/>
    <property type="match status" value="1"/>
</dbReference>
<protein>
    <recommendedName>
        <fullName evidence="1">ATP synthase subunit b</fullName>
    </recommendedName>
    <alternativeName>
        <fullName evidence="1">ATP synthase F(0) sector subunit b</fullName>
    </alternativeName>
    <alternativeName>
        <fullName evidence="1">ATPase subunit I</fullName>
    </alternativeName>
    <alternativeName>
        <fullName evidence="1">F-type ATPase subunit b</fullName>
        <shortName evidence="1">F-ATPase subunit b</shortName>
    </alternativeName>
</protein>
<proteinExistence type="inferred from homology"/>
<reference key="1">
    <citation type="submission" date="2008-05" db="EMBL/GenBank/DDBJ databases">
        <title>Genome sequence of Helicobacter pylori from the remote Amazon: traces of Asian ancestry of the first Americans.</title>
        <authorList>
            <person name="Kersulyte D."/>
            <person name="Kalia A."/>
            <person name="Gilman R.H."/>
            <person name="Berg D.E."/>
        </authorList>
    </citation>
    <scope>NUCLEOTIDE SEQUENCE [LARGE SCALE GENOMIC DNA]</scope>
    <source>
        <strain>Shi470</strain>
    </source>
</reference>
<accession>B2UUP4</accession>
<gene>
    <name evidence="1" type="primary">atpF</name>
    <name type="ordered locus">HPSH_05850</name>
</gene>